<protein>
    <recommendedName>
        <fullName evidence="1">CCA-adding enzyme</fullName>
        <ecNumber evidence="1">2.7.7.72</ecNumber>
    </recommendedName>
    <alternativeName>
        <fullName evidence="1">CCA tRNA nucleotidyltransferase</fullName>
    </alternativeName>
    <alternativeName>
        <fullName evidence="1">tRNA CCA-pyrophosphorylase</fullName>
    </alternativeName>
    <alternativeName>
        <fullName evidence="1">tRNA adenylyl-/cytidylyl- transferase</fullName>
    </alternativeName>
    <alternativeName>
        <fullName evidence="1">tRNA nucleotidyltransferase</fullName>
    </alternativeName>
    <alternativeName>
        <fullName evidence="1">tRNA-NT</fullName>
    </alternativeName>
</protein>
<gene>
    <name evidence="1" type="primary">cca</name>
    <name type="ordered locus">Bfl062</name>
</gene>
<sequence length="411" mass="47516">MKKYLVGGAVRDSLLNLPITEKDWVITGSSAQEMLSIGYEQVGKDFPVFLHPKSHEEYALARTERKLGSGYTGFICHTEPSITIEEDLYRRDLTINAMAYDMNGNLLDPYNGQKDIQLRLLRHVSNAFYEDPLRVLRVARFAAKLKNIGFTIAIETFEIMTHMIHELKSLSPERVWMETKKALITDNPQVYFQVLKKCGALKILFPELDILFTIPQCTTHHSNLMNLGNQTMTRLSNISCLSNDLAIRYAILCCNLGSEMNPRKQPLKQLTQKKPQISIINNLCNRLKVPNNILKLTKIVFMYYHDLYDVTKLSSEMIMTIFQAFDCWRTPTRIELIIKINQSQLLGSKFHINYLFFQSTLLRTAFNETTQIKANDIINSGFSGINISQELYSRRLHVLKHWKNKFLTHKQ</sequence>
<reference key="1">
    <citation type="journal article" date="2003" name="Proc. Natl. Acad. Sci. U.S.A.">
        <title>The genome sequence of Blochmannia floridanus: comparative analysis of reduced genomes.</title>
        <authorList>
            <person name="Gil R."/>
            <person name="Silva F.J."/>
            <person name="Zientz E."/>
            <person name="Delmotte F."/>
            <person name="Gonzalez-Candelas F."/>
            <person name="Latorre A."/>
            <person name="Rausell C."/>
            <person name="Kamerbeek J."/>
            <person name="Gadau J."/>
            <person name="Hoelldobler B."/>
            <person name="van Ham R.C.H.J."/>
            <person name="Gross R."/>
            <person name="Moya A."/>
        </authorList>
    </citation>
    <scope>NUCLEOTIDE SEQUENCE [LARGE SCALE GENOMIC DNA]</scope>
</reference>
<dbReference type="EC" id="2.7.7.72" evidence="1"/>
<dbReference type="EMBL" id="BX248583">
    <property type="protein sequence ID" value="CAD83587.1"/>
    <property type="molecule type" value="Genomic_DNA"/>
</dbReference>
<dbReference type="SMR" id="Q7U350"/>
<dbReference type="STRING" id="203907.Bfl062"/>
<dbReference type="KEGG" id="bfl:Bfl062"/>
<dbReference type="eggNOG" id="COG0617">
    <property type="taxonomic scope" value="Bacteria"/>
</dbReference>
<dbReference type="HOGENOM" id="CLU_015961_1_1_6"/>
<dbReference type="OrthoDB" id="9805698at2"/>
<dbReference type="Proteomes" id="UP000002192">
    <property type="component" value="Chromosome"/>
</dbReference>
<dbReference type="GO" id="GO:0005524">
    <property type="term" value="F:ATP binding"/>
    <property type="evidence" value="ECO:0007669"/>
    <property type="project" value="UniProtKB-UniRule"/>
</dbReference>
<dbReference type="GO" id="GO:0004810">
    <property type="term" value="F:CCA tRNA nucleotidyltransferase activity"/>
    <property type="evidence" value="ECO:0007669"/>
    <property type="project" value="UniProtKB-UniRule"/>
</dbReference>
<dbReference type="GO" id="GO:0000287">
    <property type="term" value="F:magnesium ion binding"/>
    <property type="evidence" value="ECO:0007669"/>
    <property type="project" value="UniProtKB-UniRule"/>
</dbReference>
<dbReference type="GO" id="GO:0000049">
    <property type="term" value="F:tRNA binding"/>
    <property type="evidence" value="ECO:0007669"/>
    <property type="project" value="UniProtKB-UniRule"/>
</dbReference>
<dbReference type="GO" id="GO:0042245">
    <property type="term" value="P:RNA repair"/>
    <property type="evidence" value="ECO:0007669"/>
    <property type="project" value="UniProtKB-KW"/>
</dbReference>
<dbReference type="GO" id="GO:0001680">
    <property type="term" value="P:tRNA 3'-terminal CCA addition"/>
    <property type="evidence" value="ECO:0007669"/>
    <property type="project" value="UniProtKB-UniRule"/>
</dbReference>
<dbReference type="CDD" id="cd05398">
    <property type="entry name" value="NT_ClassII-CCAase"/>
    <property type="match status" value="1"/>
</dbReference>
<dbReference type="Gene3D" id="3.30.460.10">
    <property type="entry name" value="Beta Polymerase, domain 2"/>
    <property type="match status" value="1"/>
</dbReference>
<dbReference type="Gene3D" id="1.10.3090.10">
    <property type="entry name" value="cca-adding enzyme, domain 2"/>
    <property type="match status" value="1"/>
</dbReference>
<dbReference type="HAMAP" id="MF_01262">
    <property type="entry name" value="CCA_bact_type2"/>
    <property type="match status" value="1"/>
</dbReference>
<dbReference type="InterPro" id="IPR012006">
    <property type="entry name" value="CCA_bact"/>
</dbReference>
<dbReference type="InterPro" id="IPR006674">
    <property type="entry name" value="HD_domain"/>
</dbReference>
<dbReference type="InterPro" id="IPR043519">
    <property type="entry name" value="NT_sf"/>
</dbReference>
<dbReference type="InterPro" id="IPR002646">
    <property type="entry name" value="PolA_pol_head_dom"/>
</dbReference>
<dbReference type="InterPro" id="IPR032828">
    <property type="entry name" value="PolyA_RNA-bd"/>
</dbReference>
<dbReference type="InterPro" id="IPR050124">
    <property type="entry name" value="tRNA_CCA-adding_enzyme"/>
</dbReference>
<dbReference type="NCBIfam" id="NF008137">
    <property type="entry name" value="PRK10885.1"/>
    <property type="match status" value="1"/>
</dbReference>
<dbReference type="NCBIfam" id="NF009813">
    <property type="entry name" value="PRK13298.1"/>
    <property type="match status" value="1"/>
</dbReference>
<dbReference type="PANTHER" id="PTHR47545">
    <property type="entry name" value="MULTIFUNCTIONAL CCA PROTEIN"/>
    <property type="match status" value="1"/>
</dbReference>
<dbReference type="PANTHER" id="PTHR47545:SF1">
    <property type="entry name" value="MULTIFUNCTIONAL CCA PROTEIN"/>
    <property type="match status" value="1"/>
</dbReference>
<dbReference type="Pfam" id="PF01743">
    <property type="entry name" value="PolyA_pol"/>
    <property type="match status" value="1"/>
</dbReference>
<dbReference type="Pfam" id="PF12627">
    <property type="entry name" value="PolyA_pol_RNAbd"/>
    <property type="match status" value="1"/>
</dbReference>
<dbReference type="PIRSF" id="PIRSF000813">
    <property type="entry name" value="CCA_bact"/>
    <property type="match status" value="1"/>
</dbReference>
<dbReference type="SUPFAM" id="SSF81301">
    <property type="entry name" value="Nucleotidyltransferase"/>
    <property type="match status" value="1"/>
</dbReference>
<dbReference type="SUPFAM" id="SSF81891">
    <property type="entry name" value="Poly A polymerase C-terminal region-like"/>
    <property type="match status" value="1"/>
</dbReference>
<dbReference type="PROSITE" id="PS51831">
    <property type="entry name" value="HD"/>
    <property type="match status" value="1"/>
</dbReference>
<comment type="function">
    <text evidence="1">Catalyzes the addition and repair of the essential 3'-terminal CCA sequence in tRNAs without using a nucleic acid template. Adds these three nucleotides in the order of C, C, and A to the tRNA nucleotide-73, using CTP and ATP as substrates and producing inorganic pyrophosphate. tRNA 3'-terminal CCA addition is required both for tRNA processing and repair. Also involved in tRNA surveillance by mediating tandem CCA addition to generate a CCACCA at the 3' terminus of unstable tRNAs. While stable tRNAs receive only 3'-terminal CCA, unstable tRNAs are marked with CCACCA and rapidly degraded.</text>
</comment>
<comment type="catalytic activity">
    <reaction evidence="1">
        <text>a tRNA precursor + 2 CTP + ATP = a tRNA with a 3' CCA end + 3 diphosphate</text>
        <dbReference type="Rhea" id="RHEA:14433"/>
        <dbReference type="Rhea" id="RHEA-COMP:10465"/>
        <dbReference type="Rhea" id="RHEA-COMP:10468"/>
        <dbReference type="ChEBI" id="CHEBI:30616"/>
        <dbReference type="ChEBI" id="CHEBI:33019"/>
        <dbReference type="ChEBI" id="CHEBI:37563"/>
        <dbReference type="ChEBI" id="CHEBI:74896"/>
        <dbReference type="ChEBI" id="CHEBI:83071"/>
        <dbReference type="EC" id="2.7.7.72"/>
    </reaction>
</comment>
<comment type="catalytic activity">
    <reaction evidence="1">
        <text>a tRNA with a 3' CCA end + 2 CTP + ATP = a tRNA with a 3' CCACCA end + 3 diphosphate</text>
        <dbReference type="Rhea" id="RHEA:76235"/>
        <dbReference type="Rhea" id="RHEA-COMP:10468"/>
        <dbReference type="Rhea" id="RHEA-COMP:18655"/>
        <dbReference type="ChEBI" id="CHEBI:30616"/>
        <dbReference type="ChEBI" id="CHEBI:33019"/>
        <dbReference type="ChEBI" id="CHEBI:37563"/>
        <dbReference type="ChEBI" id="CHEBI:83071"/>
        <dbReference type="ChEBI" id="CHEBI:195187"/>
    </reaction>
    <physiologicalReaction direction="left-to-right" evidence="1">
        <dbReference type="Rhea" id="RHEA:76236"/>
    </physiologicalReaction>
</comment>
<comment type="cofactor">
    <cofactor evidence="1">
        <name>Mg(2+)</name>
        <dbReference type="ChEBI" id="CHEBI:18420"/>
    </cofactor>
</comment>
<comment type="miscellaneous">
    <text evidence="1">A single active site specifically recognizes both ATP and CTP and is responsible for their addition.</text>
</comment>
<comment type="similarity">
    <text evidence="1">Belongs to the tRNA nucleotidyltransferase/poly(A) polymerase family. Bacterial CCA-adding enzyme type 2 subfamily.</text>
</comment>
<evidence type="ECO:0000255" key="1">
    <source>
        <dbReference type="HAMAP-Rule" id="MF_01262"/>
    </source>
</evidence>
<evidence type="ECO:0000255" key="2">
    <source>
        <dbReference type="PROSITE-ProRule" id="PRU01175"/>
    </source>
</evidence>
<accession>Q7U350</accession>
<feature type="chain" id="PRO_0000139020" description="CCA-adding enzyme">
    <location>
        <begin position="1"/>
        <end position="411"/>
    </location>
</feature>
<feature type="domain" description="HD" evidence="2">
    <location>
        <begin position="227"/>
        <end position="328"/>
    </location>
</feature>
<feature type="binding site" evidence="1">
    <location>
        <position position="8"/>
    </location>
    <ligand>
        <name>ATP</name>
        <dbReference type="ChEBI" id="CHEBI:30616"/>
    </ligand>
</feature>
<feature type="binding site" evidence="1">
    <location>
        <position position="8"/>
    </location>
    <ligand>
        <name>CTP</name>
        <dbReference type="ChEBI" id="CHEBI:37563"/>
    </ligand>
</feature>
<feature type="binding site" evidence="1">
    <location>
        <position position="11"/>
    </location>
    <ligand>
        <name>ATP</name>
        <dbReference type="ChEBI" id="CHEBI:30616"/>
    </ligand>
</feature>
<feature type="binding site" evidence="1">
    <location>
        <position position="11"/>
    </location>
    <ligand>
        <name>CTP</name>
        <dbReference type="ChEBI" id="CHEBI:37563"/>
    </ligand>
</feature>
<feature type="binding site" evidence="1">
    <location>
        <position position="21"/>
    </location>
    <ligand>
        <name>Mg(2+)</name>
        <dbReference type="ChEBI" id="CHEBI:18420"/>
    </ligand>
</feature>
<feature type="binding site" evidence="1">
    <location>
        <position position="23"/>
    </location>
    <ligand>
        <name>Mg(2+)</name>
        <dbReference type="ChEBI" id="CHEBI:18420"/>
    </ligand>
</feature>
<feature type="binding site" evidence="1">
    <location>
        <position position="91"/>
    </location>
    <ligand>
        <name>ATP</name>
        <dbReference type="ChEBI" id="CHEBI:30616"/>
    </ligand>
</feature>
<feature type="binding site" evidence="1">
    <location>
        <position position="91"/>
    </location>
    <ligand>
        <name>CTP</name>
        <dbReference type="ChEBI" id="CHEBI:37563"/>
    </ligand>
</feature>
<feature type="binding site" evidence="1">
    <location>
        <position position="137"/>
    </location>
    <ligand>
        <name>ATP</name>
        <dbReference type="ChEBI" id="CHEBI:30616"/>
    </ligand>
</feature>
<feature type="binding site" evidence="1">
    <location>
        <position position="137"/>
    </location>
    <ligand>
        <name>CTP</name>
        <dbReference type="ChEBI" id="CHEBI:37563"/>
    </ligand>
</feature>
<feature type="binding site" evidence="1">
    <location>
        <position position="140"/>
    </location>
    <ligand>
        <name>ATP</name>
        <dbReference type="ChEBI" id="CHEBI:30616"/>
    </ligand>
</feature>
<feature type="binding site" evidence="1">
    <location>
        <position position="140"/>
    </location>
    <ligand>
        <name>CTP</name>
        <dbReference type="ChEBI" id="CHEBI:37563"/>
    </ligand>
</feature>
<organism>
    <name type="scientific">Blochmanniella floridana</name>
    <dbReference type="NCBI Taxonomy" id="203907"/>
    <lineage>
        <taxon>Bacteria</taxon>
        <taxon>Pseudomonadati</taxon>
        <taxon>Pseudomonadota</taxon>
        <taxon>Gammaproteobacteria</taxon>
        <taxon>Enterobacterales</taxon>
        <taxon>Enterobacteriaceae</taxon>
        <taxon>ant endosymbionts</taxon>
        <taxon>Candidatus Blochmanniella</taxon>
    </lineage>
</organism>
<proteinExistence type="inferred from homology"/>
<name>CCA_BLOFL</name>
<keyword id="KW-0067">ATP-binding</keyword>
<keyword id="KW-0460">Magnesium</keyword>
<keyword id="KW-0479">Metal-binding</keyword>
<keyword id="KW-0547">Nucleotide-binding</keyword>
<keyword id="KW-0548">Nucleotidyltransferase</keyword>
<keyword id="KW-1185">Reference proteome</keyword>
<keyword id="KW-0692">RNA repair</keyword>
<keyword id="KW-0694">RNA-binding</keyword>
<keyword id="KW-0808">Transferase</keyword>
<keyword id="KW-0819">tRNA processing</keyword>